<protein>
    <recommendedName>
        <fullName>GTP cyclohydrolase 1</fullName>
        <ecNumber>3.5.4.16</ecNumber>
    </recommendedName>
    <alternativeName>
        <fullName>GTP cyclohydrolase I</fullName>
        <shortName>GTP-CH-I</shortName>
    </alternativeName>
</protein>
<sequence>MPSLSKEAALVHEALVARGLETPLRPPVHEMDNETRKSLIAGHMTEIMQLLNLDLADDSLMETPHRIAKMYVDEIFSGLDYANFPKITLIENKMKVDEMVTVRDITLTSTCEHHFVTIDGKATVAYIPKDSVIGLSKINRIVQFFAQRPQVQERLTQQILIALQTLLGTNNVAVSIDAVHYCVKARGIRDATSATTTTSLGGLFKSSQNTRHEFLRAVRHHN</sequence>
<accession>P0A6T8</accession>
<accession>P27511</accession>
<keyword id="KW-0342">GTP-binding</keyword>
<keyword id="KW-0378">Hydrolase</keyword>
<keyword id="KW-0479">Metal-binding</keyword>
<keyword id="KW-0547">Nucleotide-binding</keyword>
<keyword id="KW-0554">One-carbon metabolism</keyword>
<keyword id="KW-1185">Reference proteome</keyword>
<keyword id="KW-0862">Zinc</keyword>
<evidence type="ECO:0000250" key="1"/>
<evidence type="ECO:0000305" key="2"/>
<dbReference type="EC" id="3.5.4.16"/>
<dbReference type="EMBL" id="AE005674">
    <property type="protein sequence ID" value="AAN43759.1"/>
    <property type="molecule type" value="Genomic_DNA"/>
</dbReference>
<dbReference type="EMBL" id="AE014073">
    <property type="protein sequence ID" value="AAP17576.1"/>
    <property type="molecule type" value="Genomic_DNA"/>
</dbReference>
<dbReference type="RefSeq" id="NP_708052.1">
    <property type="nucleotide sequence ID" value="NC_004337.2"/>
</dbReference>
<dbReference type="RefSeq" id="WP_001139613.1">
    <property type="nucleotide sequence ID" value="NZ_WPGW01000017.1"/>
</dbReference>
<dbReference type="SMR" id="P0A6T8"/>
<dbReference type="STRING" id="198214.SF2238"/>
<dbReference type="DrugBank" id="DB04137">
    <property type="generic name" value="Guanosine-5'-Triphosphate"/>
</dbReference>
<dbReference type="PaxDb" id="198214-SF2238"/>
<dbReference type="GeneID" id="1025439"/>
<dbReference type="GeneID" id="93775029"/>
<dbReference type="KEGG" id="sfl:SF2238"/>
<dbReference type="KEGG" id="sfx:S2367"/>
<dbReference type="PATRIC" id="fig|198214.7.peg.2681"/>
<dbReference type="HOGENOM" id="CLU_049768_3_2_6"/>
<dbReference type="UniPathway" id="UPA00848">
    <property type="reaction ID" value="UER00151"/>
</dbReference>
<dbReference type="Proteomes" id="UP000001006">
    <property type="component" value="Chromosome"/>
</dbReference>
<dbReference type="Proteomes" id="UP000002673">
    <property type="component" value="Chromosome"/>
</dbReference>
<dbReference type="GO" id="GO:0005737">
    <property type="term" value="C:cytoplasm"/>
    <property type="evidence" value="ECO:0007669"/>
    <property type="project" value="TreeGrafter"/>
</dbReference>
<dbReference type="GO" id="GO:0005525">
    <property type="term" value="F:GTP binding"/>
    <property type="evidence" value="ECO:0007669"/>
    <property type="project" value="UniProtKB-KW"/>
</dbReference>
<dbReference type="GO" id="GO:0003934">
    <property type="term" value="F:GTP cyclohydrolase I activity"/>
    <property type="evidence" value="ECO:0007669"/>
    <property type="project" value="UniProtKB-UniRule"/>
</dbReference>
<dbReference type="GO" id="GO:0008270">
    <property type="term" value="F:zinc ion binding"/>
    <property type="evidence" value="ECO:0007669"/>
    <property type="project" value="UniProtKB-UniRule"/>
</dbReference>
<dbReference type="GO" id="GO:0006730">
    <property type="term" value="P:one-carbon metabolic process"/>
    <property type="evidence" value="ECO:0007669"/>
    <property type="project" value="UniProtKB-UniRule"/>
</dbReference>
<dbReference type="GO" id="GO:0006729">
    <property type="term" value="P:tetrahydrobiopterin biosynthetic process"/>
    <property type="evidence" value="ECO:0007669"/>
    <property type="project" value="TreeGrafter"/>
</dbReference>
<dbReference type="GO" id="GO:0046654">
    <property type="term" value="P:tetrahydrofolate biosynthetic process"/>
    <property type="evidence" value="ECO:0007669"/>
    <property type="project" value="UniProtKB-UniRule"/>
</dbReference>
<dbReference type="CDD" id="cd00642">
    <property type="entry name" value="GTP_cyclohydro1"/>
    <property type="match status" value="1"/>
</dbReference>
<dbReference type="FunFam" id="1.10.286.10:FF:000002">
    <property type="entry name" value="GTP cyclohydrolase 1"/>
    <property type="match status" value="1"/>
</dbReference>
<dbReference type="FunFam" id="3.30.1130.10:FF:000001">
    <property type="entry name" value="GTP cyclohydrolase 1"/>
    <property type="match status" value="1"/>
</dbReference>
<dbReference type="Gene3D" id="1.10.286.10">
    <property type="match status" value="1"/>
</dbReference>
<dbReference type="Gene3D" id="3.30.1130.10">
    <property type="match status" value="1"/>
</dbReference>
<dbReference type="HAMAP" id="MF_00223">
    <property type="entry name" value="FolE"/>
    <property type="match status" value="1"/>
</dbReference>
<dbReference type="InterPro" id="IPR043133">
    <property type="entry name" value="GTP-CH-I_C/QueF"/>
</dbReference>
<dbReference type="InterPro" id="IPR043134">
    <property type="entry name" value="GTP-CH-I_N"/>
</dbReference>
<dbReference type="InterPro" id="IPR001474">
    <property type="entry name" value="GTP_CycHdrlase_I"/>
</dbReference>
<dbReference type="InterPro" id="IPR018234">
    <property type="entry name" value="GTP_CycHdrlase_I_CS"/>
</dbReference>
<dbReference type="InterPro" id="IPR020602">
    <property type="entry name" value="GTP_CycHdrlase_I_dom"/>
</dbReference>
<dbReference type="NCBIfam" id="TIGR00063">
    <property type="entry name" value="folE"/>
    <property type="match status" value="1"/>
</dbReference>
<dbReference type="NCBIfam" id="NF006824">
    <property type="entry name" value="PRK09347.1-1"/>
    <property type="match status" value="1"/>
</dbReference>
<dbReference type="NCBIfam" id="NF006826">
    <property type="entry name" value="PRK09347.1-3"/>
    <property type="match status" value="1"/>
</dbReference>
<dbReference type="PANTHER" id="PTHR11109:SF7">
    <property type="entry name" value="GTP CYCLOHYDROLASE 1"/>
    <property type="match status" value="1"/>
</dbReference>
<dbReference type="PANTHER" id="PTHR11109">
    <property type="entry name" value="GTP CYCLOHYDROLASE I"/>
    <property type="match status" value="1"/>
</dbReference>
<dbReference type="Pfam" id="PF01227">
    <property type="entry name" value="GTP_cyclohydroI"/>
    <property type="match status" value="1"/>
</dbReference>
<dbReference type="SUPFAM" id="SSF55620">
    <property type="entry name" value="Tetrahydrobiopterin biosynthesis enzymes-like"/>
    <property type="match status" value="1"/>
</dbReference>
<dbReference type="PROSITE" id="PS00859">
    <property type="entry name" value="GTP_CYCLOHYDROL_1_1"/>
    <property type="match status" value="1"/>
</dbReference>
<dbReference type="PROSITE" id="PS00860">
    <property type="entry name" value="GTP_CYCLOHYDROL_1_2"/>
    <property type="match status" value="1"/>
</dbReference>
<name>GCH1_SHIFL</name>
<proteinExistence type="inferred from homology"/>
<organism>
    <name type="scientific">Shigella flexneri</name>
    <dbReference type="NCBI Taxonomy" id="623"/>
    <lineage>
        <taxon>Bacteria</taxon>
        <taxon>Pseudomonadati</taxon>
        <taxon>Pseudomonadota</taxon>
        <taxon>Gammaproteobacteria</taxon>
        <taxon>Enterobacterales</taxon>
        <taxon>Enterobacteriaceae</taxon>
        <taxon>Shigella</taxon>
    </lineage>
</organism>
<comment type="catalytic activity">
    <reaction>
        <text>GTP + H2O = 7,8-dihydroneopterin 3'-triphosphate + formate + H(+)</text>
        <dbReference type="Rhea" id="RHEA:17473"/>
        <dbReference type="ChEBI" id="CHEBI:15377"/>
        <dbReference type="ChEBI" id="CHEBI:15378"/>
        <dbReference type="ChEBI" id="CHEBI:15740"/>
        <dbReference type="ChEBI" id="CHEBI:37565"/>
        <dbReference type="ChEBI" id="CHEBI:58462"/>
        <dbReference type="EC" id="3.5.4.16"/>
    </reaction>
</comment>
<comment type="pathway">
    <text>Cofactor biosynthesis; 7,8-dihydroneopterin triphosphate biosynthesis; 7,8-dihydroneopterin triphosphate from GTP: step 1/1.</text>
</comment>
<comment type="subunit">
    <text evidence="1">Toroid-shaped homodecamer, composed of two pentamers of five dimers.</text>
</comment>
<comment type="similarity">
    <text evidence="2">Belongs to the GTP cyclohydrolase I family.</text>
</comment>
<gene>
    <name type="primary">folE</name>
    <name type="ordered locus">SF2238</name>
    <name type="ordered locus">S2367</name>
</gene>
<reference key="1">
    <citation type="journal article" date="2002" name="Nucleic Acids Res.">
        <title>Genome sequence of Shigella flexneri 2a: insights into pathogenicity through comparison with genomes of Escherichia coli K12 and O157.</title>
        <authorList>
            <person name="Jin Q."/>
            <person name="Yuan Z."/>
            <person name="Xu J."/>
            <person name="Wang Y."/>
            <person name="Shen Y."/>
            <person name="Lu W."/>
            <person name="Wang J."/>
            <person name="Liu H."/>
            <person name="Yang J."/>
            <person name="Yang F."/>
            <person name="Zhang X."/>
            <person name="Zhang J."/>
            <person name="Yang G."/>
            <person name="Wu H."/>
            <person name="Qu D."/>
            <person name="Dong J."/>
            <person name="Sun L."/>
            <person name="Xue Y."/>
            <person name="Zhao A."/>
            <person name="Gao Y."/>
            <person name="Zhu J."/>
            <person name="Kan B."/>
            <person name="Ding K."/>
            <person name="Chen S."/>
            <person name="Cheng H."/>
            <person name="Yao Z."/>
            <person name="He B."/>
            <person name="Chen R."/>
            <person name="Ma D."/>
            <person name="Qiang B."/>
            <person name="Wen Y."/>
            <person name="Hou Y."/>
            <person name="Yu J."/>
        </authorList>
    </citation>
    <scope>NUCLEOTIDE SEQUENCE [LARGE SCALE GENOMIC DNA]</scope>
    <source>
        <strain>301 / Serotype 2a</strain>
    </source>
</reference>
<reference key="2">
    <citation type="journal article" date="2003" name="Infect. Immun.">
        <title>Complete genome sequence and comparative genomics of Shigella flexneri serotype 2a strain 2457T.</title>
        <authorList>
            <person name="Wei J."/>
            <person name="Goldberg M.B."/>
            <person name="Burland V."/>
            <person name="Venkatesan M.M."/>
            <person name="Deng W."/>
            <person name="Fournier G."/>
            <person name="Mayhew G.F."/>
            <person name="Plunkett G. III"/>
            <person name="Rose D.J."/>
            <person name="Darling A."/>
            <person name="Mau B."/>
            <person name="Perna N.T."/>
            <person name="Payne S.M."/>
            <person name="Runyen-Janecky L.J."/>
            <person name="Zhou S."/>
            <person name="Schwartz D.C."/>
            <person name="Blattner F.R."/>
        </authorList>
    </citation>
    <scope>NUCLEOTIDE SEQUENCE [LARGE SCALE GENOMIC DNA]</scope>
    <source>
        <strain>ATCC 700930 / 2457T / Serotype 2a</strain>
    </source>
</reference>
<feature type="initiator methionine" description="Removed" evidence="1">
    <location>
        <position position="1"/>
    </location>
</feature>
<feature type="chain" id="PRO_0000119443" description="GTP cyclohydrolase 1">
    <location>
        <begin position="2"/>
        <end position="222"/>
    </location>
</feature>
<feature type="binding site" evidence="1">
    <location>
        <position position="111"/>
    </location>
    <ligand>
        <name>Zn(2+)</name>
        <dbReference type="ChEBI" id="CHEBI:29105"/>
    </ligand>
</feature>
<feature type="binding site" evidence="1">
    <location>
        <position position="114"/>
    </location>
    <ligand>
        <name>Zn(2+)</name>
        <dbReference type="ChEBI" id="CHEBI:29105"/>
    </ligand>
</feature>
<feature type="binding site" evidence="1">
    <location>
        <position position="182"/>
    </location>
    <ligand>
        <name>Zn(2+)</name>
        <dbReference type="ChEBI" id="CHEBI:29105"/>
    </ligand>
</feature>